<proteinExistence type="inferred from homology"/>
<sequence length="519" mass="55144">MTKMTSIIGILMGVLTTATAASIPTGSSAAAAAALGSLGVSPPSGNVLIGNAGYTCSLLNRVLSKNETFTVTSPYYDVLIDEAWSENCRLNASCIVTPESAEEVSRLLQILSILETRFAIRSGGHNTNPGFSSIGSDGVLIALEKLDSISLSADRGTVTVGPGNKWESVYKYLQPYNLTALGGREAVVGVGGYILGETGGLSTFYNTHGLAIDSVTRFQVVLPNGTIVDATPTEHADLYKGLKGGLNNFGIVTEYDLTTNTGVDIYYEIKTYTTANTPAVLAAYATYLLDADINSNVEIQINPSYTLVFYGYLGHVSAPTDFDPFSDIPVASTMYPPTNGSLTELLLSIGSTGLTSEGVSYSGTFSFKVTGSTFLQDTYSTYLEAAASLPTGAVLSYVPQGVIPNLVTQGKSQNGGNLLGLDATPQVWANIFVQFPATLSQSEVAGSVDSLLANLISSAKSEDLFLPYIFVNDAGAKQKPLQSFGEKNIKYIDTVAKRYDPKRIMQRLQNQAYFVLEEL</sequence>
<name>MACF_PENTR</name>
<organism>
    <name type="scientific">Penicillium terrestre</name>
    <dbReference type="NCBI Taxonomy" id="374132"/>
    <lineage>
        <taxon>Eukaryota</taxon>
        <taxon>Fungi</taxon>
        <taxon>Dikarya</taxon>
        <taxon>Ascomycota</taxon>
        <taxon>Pezizomycotina</taxon>
        <taxon>Eurotiomycetes</taxon>
        <taxon>Eurotiomycetidae</taxon>
        <taxon>Eurotiales</taxon>
        <taxon>Aspergillaceae</taxon>
        <taxon>Penicillium</taxon>
    </lineage>
</organism>
<evidence type="ECO:0000250" key="1">
    <source>
        <dbReference type="UniProtKB" id="G3Y424"/>
    </source>
</evidence>
<evidence type="ECO:0000250" key="2">
    <source>
        <dbReference type="UniProtKB" id="P08159"/>
    </source>
</evidence>
<evidence type="ECO:0000255" key="3"/>
<evidence type="ECO:0000255" key="4">
    <source>
        <dbReference type="PROSITE-ProRule" id="PRU00718"/>
    </source>
</evidence>
<evidence type="ECO:0000269" key="5">
    <source>
    </source>
</evidence>
<evidence type="ECO:0000303" key="6">
    <source>
    </source>
</evidence>
<evidence type="ECO:0000305" key="7"/>
<gene>
    <name evidence="6" type="primary">macF</name>
</gene>
<dbReference type="EC" id="1.-.-.-" evidence="1"/>
<dbReference type="EMBL" id="MF990005">
    <property type="protein sequence ID" value="AVK70106.1"/>
    <property type="molecule type" value="Genomic_DNA"/>
</dbReference>
<dbReference type="EMBL" id="MH388470">
    <property type="protein sequence ID" value="QBC75442.1"/>
    <property type="molecule type" value="Genomic_DNA"/>
</dbReference>
<dbReference type="SMR" id="A0A2P1DP98"/>
<dbReference type="UniPathway" id="UPA00213"/>
<dbReference type="GO" id="GO:0071949">
    <property type="term" value="F:FAD binding"/>
    <property type="evidence" value="ECO:0007669"/>
    <property type="project" value="InterPro"/>
</dbReference>
<dbReference type="GO" id="GO:0016491">
    <property type="term" value="F:oxidoreductase activity"/>
    <property type="evidence" value="ECO:0007669"/>
    <property type="project" value="UniProtKB-KW"/>
</dbReference>
<dbReference type="GO" id="GO:0016114">
    <property type="term" value="P:terpenoid biosynthetic process"/>
    <property type="evidence" value="ECO:0007669"/>
    <property type="project" value="UniProtKB-UniPathway"/>
</dbReference>
<dbReference type="Gene3D" id="3.30.465.10">
    <property type="match status" value="1"/>
</dbReference>
<dbReference type="InterPro" id="IPR016166">
    <property type="entry name" value="FAD-bd_PCMH"/>
</dbReference>
<dbReference type="InterPro" id="IPR036318">
    <property type="entry name" value="FAD-bd_PCMH-like_sf"/>
</dbReference>
<dbReference type="InterPro" id="IPR016169">
    <property type="entry name" value="FAD-bd_PCMH_sub2"/>
</dbReference>
<dbReference type="InterPro" id="IPR050416">
    <property type="entry name" value="FAD-linked_Oxidoreductase"/>
</dbReference>
<dbReference type="InterPro" id="IPR006094">
    <property type="entry name" value="Oxid_FAD_bind_N"/>
</dbReference>
<dbReference type="PANTHER" id="PTHR42973">
    <property type="entry name" value="BINDING OXIDOREDUCTASE, PUTATIVE (AFU_ORTHOLOGUE AFUA_1G17690)-RELATED"/>
    <property type="match status" value="1"/>
</dbReference>
<dbReference type="PANTHER" id="PTHR42973:SF54">
    <property type="entry name" value="FAD-BINDING PCMH-TYPE DOMAIN-CONTAINING PROTEIN"/>
    <property type="match status" value="1"/>
</dbReference>
<dbReference type="Pfam" id="PF01565">
    <property type="entry name" value="FAD_binding_4"/>
    <property type="match status" value="1"/>
</dbReference>
<dbReference type="SUPFAM" id="SSF56176">
    <property type="entry name" value="FAD-binding/transporter-associated domain-like"/>
    <property type="match status" value="1"/>
</dbReference>
<dbReference type="PROSITE" id="PS51387">
    <property type="entry name" value="FAD_PCMH"/>
    <property type="match status" value="1"/>
</dbReference>
<protein>
    <recommendedName>
        <fullName evidence="6">FAD-dependent monooxygenase macF</fullName>
        <ecNumber evidence="1">1.-.-.-</ecNumber>
    </recommendedName>
    <alternativeName>
        <fullName evidence="6">Macrophorins biosynthesis cluster protein F</fullName>
    </alternativeName>
</protein>
<accession>A0A2P1DP98</accession>
<keyword id="KW-0274">FAD</keyword>
<keyword id="KW-0285">Flavoprotein</keyword>
<keyword id="KW-0560">Oxidoreductase</keyword>
<keyword id="KW-0732">Signal</keyword>
<comment type="function">
    <text evidence="1 5">FAD-dependent monooxygenase; part of the gene cluster that mediates the biosynthesis of macrophorins, isoprenoid epoxycyclohexenones containing cyclized drimane moieties (PubMed:28926261). The first step of the pathway is the synthesis of 6-methylsalicylic acid (6-MSA) by the polyketide synthase macA (PubMed:28926261). 6-MSA is then converted to m-cresol by the decarboxylase macB (By similarity). The cytochrome P450 monooxygenase macC then catalyzes the oxidation of m-cresol to toluquinol (By similarity). Epoxidation of toluquinol is then performed by the short chain dehydrogenase macD, with the help of macE, and a further prenylation by macG leads to 7-deacetoxyyanuthone A (By similarity). The next step is the hydroxylation of C-22 of 7-deacetoxyyanuthone A by the cytochrome P450 monooxygenase macH to yield 22-deacetylyanuthone A (By similarity). O-Mevalon transferase macI then attaches mevalon to the hydroxyl group of 22-deacetylyanuthone A to produce yanuthone E (By similarity). The terpene cyclase macJ catalyzes the cyclization of 22-deacetylyanuthone A to macrophorin A (PubMed:28926261). MacJ is also able to catalyze cyclization of yanuthone E and 7-deacetoxyyanuthone A to their corresponding macrophorins (PubMed:28926261). The macJ products can be further modified by macH and macJ, as well as by the FAD-dependent monooxygenase macF, to produce additional macrophorins, including 4'-oxomacrophorin A, 4'-oxomacrophorin D and 4'-oxomacrophorin E (PubMed:28926261).</text>
</comment>
<comment type="pathway">
    <text evidence="5">Secondary metabolite biosynthesis; terpenoid biosynthesis.</text>
</comment>
<comment type="miscellaneous">
    <text evidence="5">The macrophorins cluster contains a single gene insertion (encoding for the terpene cyclase macJ) compared with the yanuthone cluster that produces the linear compound yanuthone.</text>
</comment>
<comment type="similarity">
    <text evidence="7">Belongs to the oxygen-dependent FAD-linked oxidoreductase family.</text>
</comment>
<reference key="1">
    <citation type="journal article" date="2017" name="Org. Lett.">
        <title>Late-stage terpene cyclization by an integral membrane cyclase in the biosynthesis of isoprenoid epoxycyclohexenone natural products.</title>
        <authorList>
            <person name="Tang M.C."/>
            <person name="Cui X."/>
            <person name="He X."/>
            <person name="Ding Z."/>
            <person name="Zhu T."/>
            <person name="Tang Y."/>
            <person name="Li D."/>
        </authorList>
    </citation>
    <scope>NUCLEOTIDE SEQUENCE [GENOMIC DNA]</scope>
    <scope>FUNCTION</scope>
    <scope>PATHWAY</scope>
    <source>
        <strain>LM2</strain>
    </source>
</reference>
<feature type="signal peptide" evidence="3">
    <location>
        <begin position="1"/>
        <end position="20"/>
    </location>
</feature>
<feature type="chain" id="PRO_5015136411" description="FAD-dependent monooxygenase macF">
    <location>
        <begin position="21"/>
        <end position="519"/>
    </location>
</feature>
<feature type="domain" description="FAD-binding PCMH-type" evidence="4">
    <location>
        <begin position="88"/>
        <end position="262"/>
    </location>
</feature>
<feature type="modified residue" description="Pros-8alpha-FAD histidine" evidence="2">
    <location>
        <position position="125"/>
    </location>
</feature>